<evidence type="ECO:0000255" key="1">
    <source>
        <dbReference type="HAMAP-Rule" id="MF_00377"/>
    </source>
</evidence>
<name>DNAA_LEPIC</name>
<accession>Q72WD6</accession>
<gene>
    <name evidence="1" type="primary">dnaA</name>
    <name type="ordered locus">LIC_10001</name>
</gene>
<protein>
    <recommendedName>
        <fullName evidence="1">Chromosomal replication initiator protein DnaA</fullName>
    </recommendedName>
</protein>
<dbReference type="EMBL" id="AE016823">
    <property type="protein sequence ID" value="AAS68638.1"/>
    <property type="molecule type" value="Genomic_DNA"/>
</dbReference>
<dbReference type="RefSeq" id="WP_000478209.1">
    <property type="nucleotide sequence ID" value="NC_005823.1"/>
</dbReference>
<dbReference type="SMR" id="Q72WD6"/>
<dbReference type="GeneID" id="61143356"/>
<dbReference type="KEGG" id="lic:LIC_10001"/>
<dbReference type="HOGENOM" id="CLU_026910_3_2_12"/>
<dbReference type="Proteomes" id="UP000007037">
    <property type="component" value="Chromosome I"/>
</dbReference>
<dbReference type="GO" id="GO:0005737">
    <property type="term" value="C:cytoplasm"/>
    <property type="evidence" value="ECO:0007669"/>
    <property type="project" value="UniProtKB-SubCell"/>
</dbReference>
<dbReference type="GO" id="GO:0005886">
    <property type="term" value="C:plasma membrane"/>
    <property type="evidence" value="ECO:0007669"/>
    <property type="project" value="TreeGrafter"/>
</dbReference>
<dbReference type="GO" id="GO:0005524">
    <property type="term" value="F:ATP binding"/>
    <property type="evidence" value="ECO:0007669"/>
    <property type="project" value="UniProtKB-UniRule"/>
</dbReference>
<dbReference type="GO" id="GO:0016887">
    <property type="term" value="F:ATP hydrolysis activity"/>
    <property type="evidence" value="ECO:0007669"/>
    <property type="project" value="InterPro"/>
</dbReference>
<dbReference type="GO" id="GO:0003688">
    <property type="term" value="F:DNA replication origin binding"/>
    <property type="evidence" value="ECO:0007669"/>
    <property type="project" value="UniProtKB-UniRule"/>
</dbReference>
<dbReference type="GO" id="GO:0008289">
    <property type="term" value="F:lipid binding"/>
    <property type="evidence" value="ECO:0007669"/>
    <property type="project" value="UniProtKB-KW"/>
</dbReference>
<dbReference type="GO" id="GO:0006270">
    <property type="term" value="P:DNA replication initiation"/>
    <property type="evidence" value="ECO:0007669"/>
    <property type="project" value="UniProtKB-UniRule"/>
</dbReference>
<dbReference type="GO" id="GO:0006275">
    <property type="term" value="P:regulation of DNA replication"/>
    <property type="evidence" value="ECO:0007669"/>
    <property type="project" value="UniProtKB-UniRule"/>
</dbReference>
<dbReference type="CDD" id="cd00009">
    <property type="entry name" value="AAA"/>
    <property type="match status" value="1"/>
</dbReference>
<dbReference type="CDD" id="cd06571">
    <property type="entry name" value="Bac_DnaA_C"/>
    <property type="match status" value="1"/>
</dbReference>
<dbReference type="FunFam" id="3.40.50.300:FF:000668">
    <property type="entry name" value="Chromosomal replication initiator protein DnaA"/>
    <property type="match status" value="1"/>
</dbReference>
<dbReference type="Gene3D" id="1.10.1750.10">
    <property type="match status" value="1"/>
</dbReference>
<dbReference type="Gene3D" id="1.10.8.60">
    <property type="match status" value="1"/>
</dbReference>
<dbReference type="Gene3D" id="3.30.300.180">
    <property type="match status" value="1"/>
</dbReference>
<dbReference type="Gene3D" id="3.40.50.300">
    <property type="entry name" value="P-loop containing nucleotide triphosphate hydrolases"/>
    <property type="match status" value="1"/>
</dbReference>
<dbReference type="HAMAP" id="MF_00377">
    <property type="entry name" value="DnaA_bact"/>
    <property type="match status" value="1"/>
</dbReference>
<dbReference type="InterPro" id="IPR003593">
    <property type="entry name" value="AAA+_ATPase"/>
</dbReference>
<dbReference type="InterPro" id="IPR001957">
    <property type="entry name" value="Chromosome_initiator_DnaA"/>
</dbReference>
<dbReference type="InterPro" id="IPR020591">
    <property type="entry name" value="Chromosome_initiator_DnaA-like"/>
</dbReference>
<dbReference type="InterPro" id="IPR013159">
    <property type="entry name" value="DnaA_C"/>
</dbReference>
<dbReference type="InterPro" id="IPR013317">
    <property type="entry name" value="DnaA_dom"/>
</dbReference>
<dbReference type="InterPro" id="IPR024633">
    <property type="entry name" value="DnaA_N_dom"/>
</dbReference>
<dbReference type="InterPro" id="IPR038454">
    <property type="entry name" value="DnaA_N_sf"/>
</dbReference>
<dbReference type="InterPro" id="IPR027417">
    <property type="entry name" value="P-loop_NTPase"/>
</dbReference>
<dbReference type="InterPro" id="IPR010921">
    <property type="entry name" value="Trp_repressor/repl_initiator"/>
</dbReference>
<dbReference type="NCBIfam" id="TIGR00362">
    <property type="entry name" value="DnaA"/>
    <property type="match status" value="1"/>
</dbReference>
<dbReference type="PANTHER" id="PTHR30050">
    <property type="entry name" value="CHROMOSOMAL REPLICATION INITIATOR PROTEIN DNAA"/>
    <property type="match status" value="1"/>
</dbReference>
<dbReference type="PANTHER" id="PTHR30050:SF2">
    <property type="entry name" value="CHROMOSOMAL REPLICATION INITIATOR PROTEIN DNAA"/>
    <property type="match status" value="1"/>
</dbReference>
<dbReference type="Pfam" id="PF00308">
    <property type="entry name" value="Bac_DnaA"/>
    <property type="match status" value="1"/>
</dbReference>
<dbReference type="Pfam" id="PF08299">
    <property type="entry name" value="Bac_DnaA_C"/>
    <property type="match status" value="1"/>
</dbReference>
<dbReference type="Pfam" id="PF11638">
    <property type="entry name" value="DnaA_N"/>
    <property type="match status" value="1"/>
</dbReference>
<dbReference type="PRINTS" id="PR00051">
    <property type="entry name" value="DNAA"/>
</dbReference>
<dbReference type="SMART" id="SM00382">
    <property type="entry name" value="AAA"/>
    <property type="match status" value="1"/>
</dbReference>
<dbReference type="SMART" id="SM00760">
    <property type="entry name" value="Bac_DnaA_C"/>
    <property type="match status" value="1"/>
</dbReference>
<dbReference type="SUPFAM" id="SSF52540">
    <property type="entry name" value="P-loop containing nucleoside triphosphate hydrolases"/>
    <property type="match status" value="1"/>
</dbReference>
<dbReference type="SUPFAM" id="SSF48295">
    <property type="entry name" value="TrpR-like"/>
    <property type="match status" value="1"/>
</dbReference>
<comment type="function">
    <text evidence="1">Plays an essential role in the initiation and regulation of chromosomal replication. ATP-DnaA binds to the origin of replication (oriC) to initiate formation of the DNA replication initiation complex once per cell cycle. Binds the DnaA box (a 9 base pair repeat at the origin) and separates the double-stranded (ds)DNA. Forms a right-handed helical filament on oriC DNA; dsDNA binds to the exterior of the filament while single-stranded (ss)DNA is stabiized in the filament's interior. The ATP-DnaA-oriC complex binds and stabilizes one strand of the AT-rich DNA unwinding element (DUE), permitting loading of DNA polymerase. After initiation quickly degrades to an ADP-DnaA complex that is not apt for DNA replication. Binds acidic phospholipids.</text>
</comment>
<comment type="subunit">
    <text evidence="1">Oligomerizes as a right-handed, spiral filament on DNA at oriC.</text>
</comment>
<comment type="subcellular location">
    <subcellularLocation>
        <location evidence="1">Cytoplasm</location>
    </subcellularLocation>
</comment>
<comment type="domain">
    <text evidence="1">Domain I is involved in oligomerization and binding regulators, domain II is flexibile and of varying length in different bacteria, domain III forms the AAA+ region, while domain IV binds dsDNA.</text>
</comment>
<comment type="similarity">
    <text evidence="1">Belongs to the DnaA family.</text>
</comment>
<organism>
    <name type="scientific">Leptospira interrogans serogroup Icterohaemorrhagiae serovar copenhageni (strain Fiocruz L1-130)</name>
    <dbReference type="NCBI Taxonomy" id="267671"/>
    <lineage>
        <taxon>Bacteria</taxon>
        <taxon>Pseudomonadati</taxon>
        <taxon>Spirochaetota</taxon>
        <taxon>Spirochaetia</taxon>
        <taxon>Leptospirales</taxon>
        <taxon>Leptospiraceae</taxon>
        <taxon>Leptospira</taxon>
    </lineage>
</organism>
<feature type="chain" id="PRO_0000114199" description="Chromosomal replication initiator protein DnaA">
    <location>
        <begin position="1"/>
        <end position="443"/>
    </location>
</feature>
<feature type="region of interest" description="Domain I, interacts with DnaA modulators" evidence="1">
    <location>
        <begin position="1"/>
        <end position="80"/>
    </location>
</feature>
<feature type="region of interest" description="Domain II" evidence="1">
    <location>
        <begin position="80"/>
        <end position="104"/>
    </location>
</feature>
<feature type="region of interest" description="Domain III, AAA+ region" evidence="1">
    <location>
        <begin position="105"/>
        <end position="321"/>
    </location>
</feature>
<feature type="region of interest" description="Domain IV, binds dsDNA" evidence="1">
    <location>
        <begin position="322"/>
        <end position="443"/>
    </location>
</feature>
<feature type="binding site" evidence="1">
    <location>
        <position position="148"/>
    </location>
    <ligand>
        <name>ATP</name>
        <dbReference type="ChEBI" id="CHEBI:30616"/>
    </ligand>
</feature>
<feature type="binding site" evidence="1">
    <location>
        <position position="150"/>
    </location>
    <ligand>
        <name>ATP</name>
        <dbReference type="ChEBI" id="CHEBI:30616"/>
    </ligand>
</feature>
<feature type="binding site" evidence="1">
    <location>
        <position position="151"/>
    </location>
    <ligand>
        <name>ATP</name>
        <dbReference type="ChEBI" id="CHEBI:30616"/>
    </ligand>
</feature>
<feature type="binding site" evidence="1">
    <location>
        <position position="152"/>
    </location>
    <ligand>
        <name>ATP</name>
        <dbReference type="ChEBI" id="CHEBI:30616"/>
    </ligand>
</feature>
<proteinExistence type="inferred from homology"/>
<sequence length="443" mass="51622">MFLEEKLNLVWNKILEEVSKKISPQYYERFIDTLKLETINSEKCTIIAPSATIKTHVERKYQSIIENAILETCGDKIPVEILIETKAASPLQSILEKSFDQKDFQFNPDYTFETFIVGDCNRLAYTAAKECVRKPAEINPLYIFGSVGVGKTHLLHAIGSELTKKDPWKTVCYVDISSFMNEFRFALQSRELIESFKIKYQSYNCLIVDDIQLLSTNAEKTQDEFFALFNFLFERKRQIVIASDRPSSELAIHERLKSRFVTGVQADIQYPDREIRKGIVTHHSKIMDLGLSEDILDFLADQIEEDTRLLLGALNDIYLYKKSYSLLFLNLDKVKEIVKNRLYRKKNIEFSHDRIIEAVAKEFNLNTAEIMGKSRKKELIIPRHICFYLLHNVFNVNKSQVGRLFQTQHTTVIHGVRKTEELLSNNKEMRFLVERISSKYKLQ</sequence>
<reference key="1">
    <citation type="journal article" date="2004" name="J. Bacteriol.">
        <title>Comparative genomics of two Leptospira interrogans serovars reveals novel insights into physiology and pathogenesis.</title>
        <authorList>
            <person name="Nascimento A.L.T.O."/>
            <person name="Ko A.I."/>
            <person name="Martins E.A.L."/>
            <person name="Monteiro-Vitorello C.B."/>
            <person name="Ho P.L."/>
            <person name="Haake D.A."/>
            <person name="Verjovski-Almeida S."/>
            <person name="Hartskeerl R.A."/>
            <person name="Marques M.V."/>
            <person name="Oliveira M.C."/>
            <person name="Menck C.F.M."/>
            <person name="Leite L.C.C."/>
            <person name="Carrer H."/>
            <person name="Coutinho L.L."/>
            <person name="Degrave W.M."/>
            <person name="Dellagostin O.A."/>
            <person name="El-Dorry H."/>
            <person name="Ferro E.S."/>
            <person name="Ferro M.I.T."/>
            <person name="Furlan L.R."/>
            <person name="Gamberini M."/>
            <person name="Giglioti E.A."/>
            <person name="Goes-Neto A."/>
            <person name="Goldman G.H."/>
            <person name="Goldman M.H.S."/>
            <person name="Harakava R."/>
            <person name="Jeronimo S.M.B."/>
            <person name="Junqueira-de-Azevedo I.L.M."/>
            <person name="Kimura E.T."/>
            <person name="Kuramae E.E."/>
            <person name="Lemos E.G.M."/>
            <person name="Lemos M.V.F."/>
            <person name="Marino C.L."/>
            <person name="Nunes L.R."/>
            <person name="de Oliveira R.C."/>
            <person name="Pereira G.G."/>
            <person name="Reis M.S."/>
            <person name="Schriefer A."/>
            <person name="Siqueira W.J."/>
            <person name="Sommer P."/>
            <person name="Tsai S.M."/>
            <person name="Simpson A.J.G."/>
            <person name="Ferro J.A."/>
            <person name="Camargo L.E.A."/>
            <person name="Kitajima J.P."/>
            <person name="Setubal J.C."/>
            <person name="Van Sluys M.A."/>
        </authorList>
    </citation>
    <scope>NUCLEOTIDE SEQUENCE [LARGE SCALE GENOMIC DNA]</scope>
    <source>
        <strain>Fiocruz L1-130</strain>
    </source>
</reference>
<keyword id="KW-0067">ATP-binding</keyword>
<keyword id="KW-0963">Cytoplasm</keyword>
<keyword id="KW-0235">DNA replication</keyword>
<keyword id="KW-0238">DNA-binding</keyword>
<keyword id="KW-0446">Lipid-binding</keyword>
<keyword id="KW-0547">Nucleotide-binding</keyword>